<dbReference type="EC" id="1.13.11.-" evidence="2"/>
<dbReference type="EC" id="1.13.11.71" evidence="2"/>
<dbReference type="EMBL" id="CR857345">
    <property type="protein sequence ID" value="CAH89641.1"/>
    <property type="molecule type" value="mRNA"/>
</dbReference>
<dbReference type="SMR" id="Q5RF16"/>
<dbReference type="FunCoup" id="Q5RF16">
    <property type="interactions" value="842"/>
</dbReference>
<dbReference type="STRING" id="9601.ENSPPYP00000004443"/>
<dbReference type="eggNOG" id="KOG1285">
    <property type="taxonomic scope" value="Eukaryota"/>
</dbReference>
<dbReference type="InParanoid" id="Q5RF16"/>
<dbReference type="Proteomes" id="UP000001595">
    <property type="component" value="Unplaced"/>
</dbReference>
<dbReference type="GO" id="GO:0005739">
    <property type="term" value="C:mitochondrion"/>
    <property type="evidence" value="ECO:0000250"/>
    <property type="project" value="UniProtKB"/>
</dbReference>
<dbReference type="GO" id="GO:0010437">
    <property type="term" value="F:9,10 (9', 10')-carotenoid-cleaving dioxygenase activity"/>
    <property type="evidence" value="ECO:0000250"/>
    <property type="project" value="UniProtKB"/>
</dbReference>
<dbReference type="GO" id="GO:0102076">
    <property type="term" value="F:beta,beta-carotene-9',10'-cleaving oxygenase activity"/>
    <property type="evidence" value="ECO:0000250"/>
    <property type="project" value="UniProtKB"/>
</dbReference>
<dbReference type="GO" id="GO:0003834">
    <property type="term" value="F:beta-carotene 15,15'-dioxygenase activity"/>
    <property type="evidence" value="ECO:0007669"/>
    <property type="project" value="TreeGrafter"/>
</dbReference>
<dbReference type="GO" id="GO:0046872">
    <property type="term" value="F:metal ion binding"/>
    <property type="evidence" value="ECO:0007669"/>
    <property type="project" value="UniProtKB-KW"/>
</dbReference>
<dbReference type="GO" id="GO:0016121">
    <property type="term" value="P:carotene catabolic process"/>
    <property type="evidence" value="ECO:0000250"/>
    <property type="project" value="UniProtKB"/>
</dbReference>
<dbReference type="GO" id="GO:0062172">
    <property type="term" value="P:lutein catabolic process"/>
    <property type="evidence" value="ECO:0000250"/>
    <property type="project" value="UniProtKB"/>
</dbReference>
<dbReference type="GO" id="GO:1901176">
    <property type="term" value="P:lycopene catabolic process"/>
    <property type="evidence" value="ECO:0000250"/>
    <property type="project" value="UniProtKB"/>
</dbReference>
<dbReference type="GO" id="GO:0042574">
    <property type="term" value="P:retinal metabolic process"/>
    <property type="evidence" value="ECO:0007669"/>
    <property type="project" value="TreeGrafter"/>
</dbReference>
<dbReference type="GO" id="GO:0016124">
    <property type="term" value="P:xanthophyll catabolic process"/>
    <property type="evidence" value="ECO:0000250"/>
    <property type="project" value="UniProtKB"/>
</dbReference>
<dbReference type="GO" id="GO:1901826">
    <property type="term" value="P:zeaxanthin catabolic process"/>
    <property type="evidence" value="ECO:0000250"/>
    <property type="project" value="UniProtKB"/>
</dbReference>
<dbReference type="InterPro" id="IPR004294">
    <property type="entry name" value="Carotenoid_Oase"/>
</dbReference>
<dbReference type="PANTHER" id="PTHR10543">
    <property type="entry name" value="BETA-CAROTENE DIOXYGENASE"/>
    <property type="match status" value="1"/>
</dbReference>
<dbReference type="PANTHER" id="PTHR10543:SF122">
    <property type="entry name" value="CAROTENOID-CLEAVING DIOXYGENASE, MITOCHONDRIAL"/>
    <property type="match status" value="1"/>
</dbReference>
<dbReference type="Pfam" id="PF03055">
    <property type="entry name" value="RPE65"/>
    <property type="match status" value="1"/>
</dbReference>
<comment type="function">
    <text evidence="2">Broad specificity mitochondrial dioxygenase that mediates the asymmetric oxidative cleavage of carotenoids. Cleaves carotenes (pure hydrocarbon carotenoids) such as all-trans-beta-carotene and lycopene as well as xanthophylls (oxygenated carotenoids) such as zeaxanthin, lutein and beta-cryptoxanthin at both the 9,10 and the 9',10' carbon-carbon double bond. Through its function in carotenoids metabolism regulates oxidative stress and the production of important signaling molecules.</text>
</comment>
<comment type="catalytic activity">
    <reaction evidence="2">
        <text>all-trans-beta-carotene + O2 = beta-ionone + all-trans-10'-apo-beta-carotenal</text>
        <dbReference type="Rhea" id="RHEA:26389"/>
        <dbReference type="ChEBI" id="CHEBI:15379"/>
        <dbReference type="ChEBI" id="CHEBI:17579"/>
        <dbReference type="ChEBI" id="CHEBI:32325"/>
        <dbReference type="ChEBI" id="CHEBI:53153"/>
        <dbReference type="EC" id="1.13.11.71"/>
    </reaction>
    <physiologicalReaction direction="left-to-right" evidence="2">
        <dbReference type="Rhea" id="RHEA:26390"/>
    </physiologicalReaction>
</comment>
<comment type="catalytic activity">
    <reaction evidence="1">
        <text>5-cis-lycopene + O2 = 5-cis-10'-apo-lycopenal + (3E,5E)-6,10-dimethylundeca-3,5,9-trien-2-one</text>
        <dbReference type="Rhea" id="RHEA:68444"/>
        <dbReference type="ChEBI" id="CHEBI:15379"/>
        <dbReference type="ChEBI" id="CHEBI:67207"/>
        <dbReference type="ChEBI" id="CHEBI:177905"/>
        <dbReference type="ChEBI" id="CHEBI:177906"/>
    </reaction>
    <physiologicalReaction direction="left-to-right" evidence="1">
        <dbReference type="Rhea" id="RHEA:68445"/>
    </physiologicalReaction>
</comment>
<comment type="catalytic activity">
    <reaction evidence="1">
        <text>13-cis-lycopene + O2 = 13-cis-10'-apo-lycopenal + (3E,5E)-6,10-dimethylundeca-3,5,9-trien-2-one</text>
        <dbReference type="Rhea" id="RHEA:68448"/>
        <dbReference type="ChEBI" id="CHEBI:15379"/>
        <dbReference type="ChEBI" id="CHEBI:67207"/>
        <dbReference type="ChEBI" id="CHEBI:177907"/>
        <dbReference type="ChEBI" id="CHEBI:177908"/>
    </reaction>
    <physiologicalReaction direction="left-to-right" evidence="1">
        <dbReference type="Rhea" id="RHEA:68449"/>
    </physiologicalReaction>
</comment>
<comment type="catalytic activity">
    <reaction evidence="2">
        <text>lutein + O2 = (3R,6R)-hydroxy-alpha-ionone + (3R)-3-hydroxy-10'-apo-beta-carotenal</text>
        <dbReference type="Rhea" id="RHEA:68428"/>
        <dbReference type="ChEBI" id="CHEBI:15379"/>
        <dbReference type="ChEBI" id="CHEBI:28838"/>
        <dbReference type="ChEBI" id="CHEBI:177902"/>
        <dbReference type="ChEBI" id="CHEBI:177904"/>
    </reaction>
    <physiologicalReaction direction="left-to-right" evidence="2">
        <dbReference type="Rhea" id="RHEA:68429"/>
    </physiologicalReaction>
</comment>
<comment type="catalytic activity">
    <reaction evidence="2">
        <text>lutein + O2 = (3R,6R)-3-hydroxy-10'-apo-alpha-carotenal + (3R)-hydroxy-beta-ionone</text>
        <dbReference type="Rhea" id="RHEA:68432"/>
        <dbReference type="ChEBI" id="CHEBI:15379"/>
        <dbReference type="ChEBI" id="CHEBI:28838"/>
        <dbReference type="ChEBI" id="CHEBI:53173"/>
        <dbReference type="ChEBI" id="CHEBI:177903"/>
    </reaction>
    <physiologicalReaction direction="left-to-right" evidence="2">
        <dbReference type="Rhea" id="RHEA:68433"/>
    </physiologicalReaction>
</comment>
<comment type="catalytic activity">
    <reaction evidence="2">
        <text>all-trans-zeaxanthin + 2 O2 = 4,9-dimethyldodeca-2,4,6,8,10-pentaenedial + 2 (3R)-hydroxy-beta-ionone</text>
        <dbReference type="Rhea" id="RHEA:26393"/>
        <dbReference type="ChEBI" id="CHEBI:15379"/>
        <dbReference type="ChEBI" id="CHEBI:27547"/>
        <dbReference type="ChEBI" id="CHEBI:53171"/>
        <dbReference type="ChEBI" id="CHEBI:53173"/>
    </reaction>
    <physiologicalReaction direction="left-to-right" evidence="2">
        <dbReference type="Rhea" id="RHEA:26394"/>
    </physiologicalReaction>
</comment>
<comment type="catalytic activity">
    <reaction evidence="2">
        <text>all-trans-zeaxanthin + O2 = (3R)-3-hydroxy-10'-apo-beta-carotenal + (3R)-hydroxy-beta-ionone</text>
        <dbReference type="Rhea" id="RHEA:68104"/>
        <dbReference type="ChEBI" id="CHEBI:15379"/>
        <dbReference type="ChEBI" id="CHEBI:27547"/>
        <dbReference type="ChEBI" id="CHEBI:53173"/>
        <dbReference type="ChEBI" id="CHEBI:177902"/>
    </reaction>
    <physiologicalReaction direction="left-to-right" evidence="2">
        <dbReference type="Rhea" id="RHEA:68105"/>
    </physiologicalReaction>
</comment>
<comment type="catalytic activity">
    <reaction evidence="2">
        <text>beta-cryptoxanthin + O2 = all-trans-10'-apo-beta-carotenal + (3R)-hydroxy-beta-ionone</text>
        <dbReference type="Rhea" id="RHEA:68440"/>
        <dbReference type="ChEBI" id="CHEBI:10362"/>
        <dbReference type="ChEBI" id="CHEBI:15379"/>
        <dbReference type="ChEBI" id="CHEBI:53153"/>
        <dbReference type="ChEBI" id="CHEBI:53173"/>
    </reaction>
    <physiologicalReaction direction="left-to-right" evidence="2">
        <dbReference type="Rhea" id="RHEA:68441"/>
    </physiologicalReaction>
</comment>
<comment type="catalytic activity">
    <reaction evidence="2">
        <text>all-trans-10'-apo-beta-carotenal + O2 = beta-ionone + 4,9-dimethyldodeca-2,4,6,8,10-pentaenedial</text>
        <dbReference type="Rhea" id="RHEA:68452"/>
        <dbReference type="ChEBI" id="CHEBI:15379"/>
        <dbReference type="ChEBI" id="CHEBI:32325"/>
        <dbReference type="ChEBI" id="CHEBI:53153"/>
        <dbReference type="ChEBI" id="CHEBI:53171"/>
    </reaction>
    <physiologicalReaction direction="left-to-right" evidence="2">
        <dbReference type="Rhea" id="RHEA:68453"/>
    </physiologicalReaction>
</comment>
<comment type="catalytic activity">
    <reaction evidence="2">
        <text>(3R)-3-hydroxy-10'-apo-beta-carotenal + O2 = 4,9-dimethyldodeca-2,4,6,8,10-pentaenedial + (3R)-hydroxy-beta-ionone</text>
        <dbReference type="Rhea" id="RHEA:68424"/>
        <dbReference type="ChEBI" id="CHEBI:15379"/>
        <dbReference type="ChEBI" id="CHEBI:53171"/>
        <dbReference type="ChEBI" id="CHEBI:53173"/>
        <dbReference type="ChEBI" id="CHEBI:177902"/>
    </reaction>
    <physiologicalReaction direction="left-to-right" evidence="2">
        <dbReference type="Rhea" id="RHEA:68425"/>
    </physiologicalReaction>
</comment>
<comment type="catalytic activity">
    <reaction evidence="2">
        <text>(3R,6R)-3-hydroxy-10'-apo-alpha-carotenal + O2 = (3R,6R)-hydroxy-alpha-ionone + 4,9-dimethyldodeca-2,4,6,8,10-pentaenedial</text>
        <dbReference type="Rhea" id="RHEA:68436"/>
        <dbReference type="ChEBI" id="CHEBI:15379"/>
        <dbReference type="ChEBI" id="CHEBI:53171"/>
        <dbReference type="ChEBI" id="CHEBI:177903"/>
        <dbReference type="ChEBI" id="CHEBI:177904"/>
    </reaction>
    <physiologicalReaction direction="left-to-right" evidence="2">
        <dbReference type="Rhea" id="RHEA:68437"/>
    </physiologicalReaction>
</comment>
<comment type="cofactor">
    <cofactor evidence="1">
        <name>Fe(2+)</name>
        <dbReference type="ChEBI" id="CHEBI:29033"/>
    </cofactor>
    <text evidence="1">Binds 1 Fe(2+) ion per subunit.</text>
</comment>
<comment type="subcellular location">
    <subcellularLocation>
        <location evidence="2">Mitochondrion</location>
    </subcellularLocation>
</comment>
<comment type="similarity">
    <text evidence="5">Belongs to the carotenoid oxygenase family.</text>
</comment>
<evidence type="ECO:0000250" key="1">
    <source>
        <dbReference type="UniProtKB" id="Q6QT07"/>
    </source>
</evidence>
<evidence type="ECO:0000250" key="2">
    <source>
        <dbReference type="UniProtKB" id="Q99NF1"/>
    </source>
</evidence>
<evidence type="ECO:0000250" key="3">
    <source>
        <dbReference type="UniProtKB" id="Q9BYV7"/>
    </source>
</evidence>
<evidence type="ECO:0000250" key="4">
    <source>
        <dbReference type="UniProtKB" id="Q9JJS6"/>
    </source>
</evidence>
<evidence type="ECO:0000305" key="5"/>
<keyword id="KW-0223">Dioxygenase</keyword>
<keyword id="KW-0408">Iron</keyword>
<keyword id="KW-0443">Lipid metabolism</keyword>
<keyword id="KW-0479">Metal-binding</keyword>
<keyword id="KW-0496">Mitochondrion</keyword>
<keyword id="KW-0560">Oxidoreductase</keyword>
<keyword id="KW-1185">Reference proteome</keyword>
<feature type="chain" id="PRO_0000285999" description="Carotenoid-cleaving dioxygenase, mitochondrial">
    <location>
        <begin position="1"/>
        <end position="557"/>
    </location>
</feature>
<feature type="binding site" evidence="4">
    <location>
        <position position="203"/>
    </location>
    <ligand>
        <name>Fe cation</name>
        <dbReference type="ChEBI" id="CHEBI:24875"/>
        <note>catalytic</note>
    </ligand>
</feature>
<feature type="binding site" evidence="4">
    <location>
        <position position="263"/>
    </location>
    <ligand>
        <name>Fe cation</name>
        <dbReference type="ChEBI" id="CHEBI:24875"/>
        <note>catalytic</note>
    </ligand>
</feature>
<feature type="binding site" evidence="4">
    <location>
        <position position="334"/>
    </location>
    <ligand>
        <name>Fe cation</name>
        <dbReference type="ChEBI" id="CHEBI:24875"/>
        <note>catalytic</note>
    </ligand>
</feature>
<feature type="binding site" evidence="4">
    <location>
        <position position="551"/>
    </location>
    <ligand>
        <name>Fe cation</name>
        <dbReference type="ChEBI" id="CHEBI:24875"/>
        <note>catalytic</note>
    </ligand>
</feature>
<sequence>MVHRLPVFKRYMGNTPQKKAVFGQCRGLPCVAPLLTTVEEAPRGISARVRGHFPKWLNGSLLRTGPGKFEFGKDKYNHWFDGMALLHQFRMAKGTVTYRSKFLQSDTYKANSAKNRIVISEFGTLALPDPCKNVFERFMSRFELPGKAAAMTDNTNVNYVRYKGDYYLCTETNFMNKVDIETLEKTEKVDWSKFIAVNGATAHPHYDPDGTAYNMGNSFGPYGFSYKVIRVPPEKVDLGETIHGAQVICSIASTEKGKPSYYHSFGMTRNYIIFIEQPLKMNLWKIATSKIRGKAFSDGISWEPQCNTWFHVVDKRTGQLLPGRYYSKPFVTFHQINAFEDQGCVIIDLCCQDNGRTLEVYQLQNLRKAGEGLDQVYNSAAKSFPRRFVLPLNVSLNAPEGDNLSPLSYTSASAVKQADGTIWCSHENLHQEDLEKEGGIEFPQIYYDQFSGKKYHFFYGCGFRHLVGGDSLIKVDVVNKTLKVWREDGFYPSEPVFVPAPGTNEEDGGVILSVVITPNQNESNFLLVLDAKNFGELGRAEVPVQMPYGFHGTFIPI</sequence>
<protein>
    <recommendedName>
        <fullName evidence="2">Carotenoid-cleaving dioxygenase, mitochondrial</fullName>
        <ecNumber evidence="2">1.13.11.-</ecNumber>
        <ecNumber evidence="2">1.13.11.71</ecNumber>
    </recommendedName>
    <alternativeName>
        <fullName evidence="3">Beta-carotene dioxygenase 2</fullName>
    </alternativeName>
</protein>
<reference key="1">
    <citation type="submission" date="2004-11" db="EMBL/GenBank/DDBJ databases">
        <authorList>
            <consortium name="The German cDNA consortium"/>
        </authorList>
    </citation>
    <scope>NUCLEOTIDE SEQUENCE [LARGE SCALE MRNA]</scope>
    <source>
        <tissue>Kidney</tissue>
    </source>
</reference>
<organism>
    <name type="scientific">Pongo abelii</name>
    <name type="common">Sumatran orangutan</name>
    <name type="synonym">Pongo pygmaeus abelii</name>
    <dbReference type="NCBI Taxonomy" id="9601"/>
    <lineage>
        <taxon>Eukaryota</taxon>
        <taxon>Metazoa</taxon>
        <taxon>Chordata</taxon>
        <taxon>Craniata</taxon>
        <taxon>Vertebrata</taxon>
        <taxon>Euteleostomi</taxon>
        <taxon>Mammalia</taxon>
        <taxon>Eutheria</taxon>
        <taxon>Euarchontoglires</taxon>
        <taxon>Primates</taxon>
        <taxon>Haplorrhini</taxon>
        <taxon>Catarrhini</taxon>
        <taxon>Hominidae</taxon>
        <taxon>Pongo</taxon>
    </lineage>
</organism>
<accession>Q5RF16</accession>
<gene>
    <name evidence="3" type="primary">BCO2</name>
</gene>
<name>BCDO2_PONAB</name>
<proteinExistence type="evidence at transcript level"/>